<sequence>MLNNKRLFTSESVTEGHPDKIADQVSDAILDAILKDDPNARVACETTVTTGMALIAGEISTTTYVDIPKVVRETIKEIGYTRAKYGYDYETMAILTAIDEQSPDIAQGVDKALEYRDKDSEEEIEATGAGDQGLMFGYATNETETYMPLAIYLSHQLAKRLSDVRKDGTLNYLRPDGKVQVTVEYDENDNPVRIDTIVVSTQHADDVTLEQIQEDIKAHVIYPTVPENLINEQTKFYINPTGRFVIGGPQGDAGLTGRKIIVDTYGGYARHGGGCFSGKDPTKVDRSAAYAARYVAKNIVAAGLADQCEVQLAYAIGVAEPVSIAIDTFGTGKVSEGQLVEAVRKHFDLRPAGIIKMLDLKQPIYKQTAAYGHFGRTDVLFPWEKLDKVEELKDAVKY</sequence>
<feature type="chain" id="PRO_0000174587" description="S-adenosylmethionine synthase">
    <location>
        <begin position="1"/>
        <end position="398"/>
    </location>
</feature>
<feature type="region of interest" description="Flexible loop" evidence="1">
    <location>
        <begin position="101"/>
        <end position="111"/>
    </location>
</feature>
<feature type="binding site" description="in other chain" evidence="1">
    <location>
        <position position="17"/>
    </location>
    <ligand>
        <name>ATP</name>
        <dbReference type="ChEBI" id="CHEBI:30616"/>
        <note>ligand shared between two neighboring subunits</note>
    </ligand>
</feature>
<feature type="binding site" evidence="1">
    <location>
        <position position="19"/>
    </location>
    <ligand>
        <name>Mg(2+)</name>
        <dbReference type="ChEBI" id="CHEBI:18420"/>
    </ligand>
</feature>
<feature type="binding site" evidence="1">
    <location>
        <position position="45"/>
    </location>
    <ligand>
        <name>K(+)</name>
        <dbReference type="ChEBI" id="CHEBI:29103"/>
    </ligand>
</feature>
<feature type="binding site" description="in other chain" evidence="1">
    <location>
        <position position="58"/>
    </location>
    <ligand>
        <name>L-methionine</name>
        <dbReference type="ChEBI" id="CHEBI:57844"/>
        <note>ligand shared between two neighboring subunits</note>
    </ligand>
</feature>
<feature type="binding site" description="in other chain" evidence="1">
    <location>
        <position position="101"/>
    </location>
    <ligand>
        <name>L-methionine</name>
        <dbReference type="ChEBI" id="CHEBI:57844"/>
        <note>ligand shared between two neighboring subunits</note>
    </ligand>
</feature>
<feature type="binding site" description="in other chain" evidence="1">
    <location>
        <begin position="176"/>
        <end position="178"/>
    </location>
    <ligand>
        <name>ATP</name>
        <dbReference type="ChEBI" id="CHEBI:30616"/>
        <note>ligand shared between two neighboring subunits</note>
    </ligand>
</feature>
<feature type="binding site" description="in other chain" evidence="1">
    <location>
        <begin position="243"/>
        <end position="244"/>
    </location>
    <ligand>
        <name>ATP</name>
        <dbReference type="ChEBI" id="CHEBI:30616"/>
        <note>ligand shared between two neighboring subunits</note>
    </ligand>
</feature>
<feature type="binding site" evidence="1">
    <location>
        <position position="252"/>
    </location>
    <ligand>
        <name>ATP</name>
        <dbReference type="ChEBI" id="CHEBI:30616"/>
        <note>ligand shared between two neighboring subunits</note>
    </ligand>
</feature>
<feature type="binding site" evidence="1">
    <location>
        <position position="252"/>
    </location>
    <ligand>
        <name>L-methionine</name>
        <dbReference type="ChEBI" id="CHEBI:57844"/>
        <note>ligand shared between two neighboring subunits</note>
    </ligand>
</feature>
<feature type="binding site" description="in other chain" evidence="1">
    <location>
        <begin position="258"/>
        <end position="259"/>
    </location>
    <ligand>
        <name>ATP</name>
        <dbReference type="ChEBI" id="CHEBI:30616"/>
        <note>ligand shared between two neighboring subunits</note>
    </ligand>
</feature>
<feature type="binding site" evidence="1">
    <location>
        <position position="279"/>
    </location>
    <ligand>
        <name>ATP</name>
        <dbReference type="ChEBI" id="CHEBI:30616"/>
        <note>ligand shared between two neighboring subunits</note>
    </ligand>
</feature>
<feature type="binding site" description="in other chain" evidence="1">
    <location>
        <position position="283"/>
    </location>
    <ligand>
        <name>L-methionine</name>
        <dbReference type="ChEBI" id="CHEBI:57844"/>
        <note>ligand shared between two neighboring subunits</note>
    </ligand>
</feature>
<gene>
    <name evidence="1" type="primary">metK</name>
    <name type="ordered locus">SAV1790</name>
</gene>
<reference key="1">
    <citation type="journal article" date="2001" name="Lancet">
        <title>Whole genome sequencing of meticillin-resistant Staphylococcus aureus.</title>
        <authorList>
            <person name="Kuroda M."/>
            <person name="Ohta T."/>
            <person name="Uchiyama I."/>
            <person name="Baba T."/>
            <person name="Yuzawa H."/>
            <person name="Kobayashi I."/>
            <person name="Cui L."/>
            <person name="Oguchi A."/>
            <person name="Aoki K."/>
            <person name="Nagai Y."/>
            <person name="Lian J.-Q."/>
            <person name="Ito T."/>
            <person name="Kanamori M."/>
            <person name="Matsumaru H."/>
            <person name="Maruyama A."/>
            <person name="Murakami H."/>
            <person name="Hosoyama A."/>
            <person name="Mizutani-Ui Y."/>
            <person name="Takahashi N.K."/>
            <person name="Sawano T."/>
            <person name="Inoue R."/>
            <person name="Kaito C."/>
            <person name="Sekimizu K."/>
            <person name="Hirakawa H."/>
            <person name="Kuhara S."/>
            <person name="Goto S."/>
            <person name="Yabuzaki J."/>
            <person name="Kanehisa M."/>
            <person name="Yamashita A."/>
            <person name="Oshima K."/>
            <person name="Furuya K."/>
            <person name="Yoshino C."/>
            <person name="Shiba T."/>
            <person name="Hattori M."/>
            <person name="Ogasawara N."/>
            <person name="Hayashi H."/>
            <person name="Hiramatsu K."/>
        </authorList>
    </citation>
    <scope>NUCLEOTIDE SEQUENCE [LARGE SCALE GENOMIC DNA]</scope>
    <source>
        <strain>Mu50 / ATCC 700699</strain>
    </source>
</reference>
<accession>P66766</accession>
<accession>Q99T79</accession>
<dbReference type="EC" id="2.5.1.6" evidence="1"/>
<dbReference type="EMBL" id="BA000017">
    <property type="protein sequence ID" value="BAB57952.1"/>
    <property type="molecule type" value="Genomic_DNA"/>
</dbReference>
<dbReference type="RefSeq" id="WP_000933820.1">
    <property type="nucleotide sequence ID" value="NC_002758.2"/>
</dbReference>
<dbReference type="SMR" id="P66766"/>
<dbReference type="KEGG" id="sav:SAV1790"/>
<dbReference type="HOGENOM" id="CLU_041802_1_1_9"/>
<dbReference type="PhylomeDB" id="P66766"/>
<dbReference type="UniPathway" id="UPA00315">
    <property type="reaction ID" value="UER00080"/>
</dbReference>
<dbReference type="Proteomes" id="UP000002481">
    <property type="component" value="Chromosome"/>
</dbReference>
<dbReference type="GO" id="GO:0005737">
    <property type="term" value="C:cytoplasm"/>
    <property type="evidence" value="ECO:0007669"/>
    <property type="project" value="UniProtKB-SubCell"/>
</dbReference>
<dbReference type="GO" id="GO:0005524">
    <property type="term" value="F:ATP binding"/>
    <property type="evidence" value="ECO:0007669"/>
    <property type="project" value="UniProtKB-UniRule"/>
</dbReference>
<dbReference type="GO" id="GO:0000287">
    <property type="term" value="F:magnesium ion binding"/>
    <property type="evidence" value="ECO:0007669"/>
    <property type="project" value="UniProtKB-UniRule"/>
</dbReference>
<dbReference type="GO" id="GO:0004478">
    <property type="term" value="F:methionine adenosyltransferase activity"/>
    <property type="evidence" value="ECO:0007669"/>
    <property type="project" value="UniProtKB-UniRule"/>
</dbReference>
<dbReference type="GO" id="GO:0006730">
    <property type="term" value="P:one-carbon metabolic process"/>
    <property type="evidence" value="ECO:0007669"/>
    <property type="project" value="UniProtKB-KW"/>
</dbReference>
<dbReference type="GO" id="GO:0006556">
    <property type="term" value="P:S-adenosylmethionine biosynthetic process"/>
    <property type="evidence" value="ECO:0007669"/>
    <property type="project" value="UniProtKB-UniRule"/>
</dbReference>
<dbReference type="CDD" id="cd18079">
    <property type="entry name" value="S-AdoMet_synt"/>
    <property type="match status" value="1"/>
</dbReference>
<dbReference type="FunFam" id="3.30.300.10:FF:000003">
    <property type="entry name" value="S-adenosylmethionine synthase"/>
    <property type="match status" value="1"/>
</dbReference>
<dbReference type="FunFam" id="3.30.300.10:FF:000004">
    <property type="entry name" value="S-adenosylmethionine synthase"/>
    <property type="match status" value="1"/>
</dbReference>
<dbReference type="Gene3D" id="3.30.300.10">
    <property type="match status" value="3"/>
</dbReference>
<dbReference type="HAMAP" id="MF_00086">
    <property type="entry name" value="S_AdoMet_synth1"/>
    <property type="match status" value="1"/>
</dbReference>
<dbReference type="InterPro" id="IPR022631">
    <property type="entry name" value="ADOMET_SYNTHASE_CS"/>
</dbReference>
<dbReference type="InterPro" id="IPR022630">
    <property type="entry name" value="S-AdoMet_synt_C"/>
</dbReference>
<dbReference type="InterPro" id="IPR022629">
    <property type="entry name" value="S-AdoMet_synt_central"/>
</dbReference>
<dbReference type="InterPro" id="IPR022628">
    <property type="entry name" value="S-AdoMet_synt_N"/>
</dbReference>
<dbReference type="InterPro" id="IPR002133">
    <property type="entry name" value="S-AdoMet_synthetase"/>
</dbReference>
<dbReference type="InterPro" id="IPR022636">
    <property type="entry name" value="S-AdoMet_synthetase_sfam"/>
</dbReference>
<dbReference type="NCBIfam" id="TIGR01034">
    <property type="entry name" value="metK"/>
    <property type="match status" value="1"/>
</dbReference>
<dbReference type="PANTHER" id="PTHR11964">
    <property type="entry name" value="S-ADENOSYLMETHIONINE SYNTHETASE"/>
    <property type="match status" value="1"/>
</dbReference>
<dbReference type="Pfam" id="PF02773">
    <property type="entry name" value="S-AdoMet_synt_C"/>
    <property type="match status" value="1"/>
</dbReference>
<dbReference type="Pfam" id="PF02772">
    <property type="entry name" value="S-AdoMet_synt_M"/>
    <property type="match status" value="1"/>
</dbReference>
<dbReference type="Pfam" id="PF00438">
    <property type="entry name" value="S-AdoMet_synt_N"/>
    <property type="match status" value="1"/>
</dbReference>
<dbReference type="PIRSF" id="PIRSF000497">
    <property type="entry name" value="MAT"/>
    <property type="match status" value="1"/>
</dbReference>
<dbReference type="SUPFAM" id="SSF55973">
    <property type="entry name" value="S-adenosylmethionine synthetase"/>
    <property type="match status" value="3"/>
</dbReference>
<dbReference type="PROSITE" id="PS00376">
    <property type="entry name" value="ADOMET_SYNTHASE_1"/>
    <property type="match status" value="1"/>
</dbReference>
<dbReference type="PROSITE" id="PS00377">
    <property type="entry name" value="ADOMET_SYNTHASE_2"/>
    <property type="match status" value="1"/>
</dbReference>
<organism>
    <name type="scientific">Staphylococcus aureus (strain Mu50 / ATCC 700699)</name>
    <dbReference type="NCBI Taxonomy" id="158878"/>
    <lineage>
        <taxon>Bacteria</taxon>
        <taxon>Bacillati</taxon>
        <taxon>Bacillota</taxon>
        <taxon>Bacilli</taxon>
        <taxon>Bacillales</taxon>
        <taxon>Staphylococcaceae</taxon>
        <taxon>Staphylococcus</taxon>
    </lineage>
</organism>
<keyword id="KW-0067">ATP-binding</keyword>
<keyword id="KW-0963">Cytoplasm</keyword>
<keyword id="KW-0460">Magnesium</keyword>
<keyword id="KW-0479">Metal-binding</keyword>
<keyword id="KW-0547">Nucleotide-binding</keyword>
<keyword id="KW-0554">One-carbon metabolism</keyword>
<keyword id="KW-0630">Potassium</keyword>
<keyword id="KW-0808">Transferase</keyword>
<protein>
    <recommendedName>
        <fullName evidence="1">S-adenosylmethionine synthase</fullName>
        <shortName evidence="1">AdoMet synthase</shortName>
        <ecNumber evidence="1">2.5.1.6</ecNumber>
    </recommendedName>
    <alternativeName>
        <fullName evidence="1">MAT</fullName>
    </alternativeName>
    <alternativeName>
        <fullName evidence="1">Methionine adenosyltransferase</fullName>
    </alternativeName>
</protein>
<comment type="function">
    <text evidence="1">Catalyzes the formation of S-adenosylmethionine (AdoMet) from methionine and ATP. The overall synthetic reaction is composed of two sequential steps, AdoMet formation and the subsequent tripolyphosphate hydrolysis which occurs prior to release of AdoMet from the enzyme.</text>
</comment>
<comment type="catalytic activity">
    <reaction evidence="1">
        <text>L-methionine + ATP + H2O = S-adenosyl-L-methionine + phosphate + diphosphate</text>
        <dbReference type="Rhea" id="RHEA:21080"/>
        <dbReference type="ChEBI" id="CHEBI:15377"/>
        <dbReference type="ChEBI" id="CHEBI:30616"/>
        <dbReference type="ChEBI" id="CHEBI:33019"/>
        <dbReference type="ChEBI" id="CHEBI:43474"/>
        <dbReference type="ChEBI" id="CHEBI:57844"/>
        <dbReference type="ChEBI" id="CHEBI:59789"/>
        <dbReference type="EC" id="2.5.1.6"/>
    </reaction>
</comment>
<comment type="cofactor">
    <cofactor evidence="1">
        <name>Mg(2+)</name>
        <dbReference type="ChEBI" id="CHEBI:18420"/>
    </cofactor>
    <text evidence="1">Binds 2 divalent ions per subunit.</text>
</comment>
<comment type="cofactor">
    <cofactor evidence="1">
        <name>K(+)</name>
        <dbReference type="ChEBI" id="CHEBI:29103"/>
    </cofactor>
    <text evidence="1">Binds 1 potassium ion per subunit.</text>
</comment>
<comment type="pathway">
    <text evidence="1">Amino-acid biosynthesis; S-adenosyl-L-methionine biosynthesis; S-adenosyl-L-methionine from L-methionine: step 1/1.</text>
</comment>
<comment type="subunit">
    <text evidence="1">Homotetramer; dimer of dimers.</text>
</comment>
<comment type="subcellular location">
    <subcellularLocation>
        <location evidence="1">Cytoplasm</location>
    </subcellularLocation>
</comment>
<comment type="similarity">
    <text evidence="1">Belongs to the AdoMet synthase family.</text>
</comment>
<evidence type="ECO:0000255" key="1">
    <source>
        <dbReference type="HAMAP-Rule" id="MF_00086"/>
    </source>
</evidence>
<name>METK_STAAM</name>
<proteinExistence type="inferred from homology"/>